<keyword id="KW-0614">Plasmid</keyword>
<keyword id="KW-0663">Pyridoxal phosphate</keyword>
<keyword id="KW-1185">Reference proteome</keyword>
<keyword id="KW-0808">Transferase</keyword>
<evidence type="ECO:0000250" key="1">
    <source>
        <dbReference type="UniProtKB" id="A6QDA0"/>
    </source>
</evidence>
<evidence type="ECO:0000305" key="2"/>
<reference key="1">
    <citation type="journal article" date="2002" name="Nature">
        <title>Genome sequence of the plant pathogen Ralstonia solanacearum.</title>
        <authorList>
            <person name="Salanoubat M."/>
            <person name="Genin S."/>
            <person name="Artiguenave F."/>
            <person name="Gouzy J."/>
            <person name="Mangenot S."/>
            <person name="Arlat M."/>
            <person name="Billault A."/>
            <person name="Brottier P."/>
            <person name="Camus J.-C."/>
            <person name="Cattolico L."/>
            <person name="Chandler M."/>
            <person name="Choisne N."/>
            <person name="Claudel-Renard C."/>
            <person name="Cunnac S."/>
            <person name="Demange N."/>
            <person name="Gaspin C."/>
            <person name="Lavie M."/>
            <person name="Moisan A."/>
            <person name="Robert C."/>
            <person name="Saurin W."/>
            <person name="Schiex T."/>
            <person name="Siguier P."/>
            <person name="Thebault P."/>
            <person name="Whalen M."/>
            <person name="Wincker P."/>
            <person name="Levy M."/>
            <person name="Weissenbach J."/>
            <person name="Boucher C.A."/>
        </authorList>
    </citation>
    <scope>NUCLEOTIDE SEQUENCE [LARGE SCALE GENOMIC DNA]</scope>
    <source>
        <strain>ATCC BAA-1114 / GMI1000</strain>
    </source>
</reference>
<name>SBNA_RALN1</name>
<accession>Q8XSQ0</accession>
<sequence length="338" mass="36548">MIAKSIVDCIGGTPLVQLARLYDGRKAEVFAKLEMLNPAGSIKDRPARYIIERGLAEGSIAPGTHIIESSSGNLAIALAMVCRIKGLRFTAVVDPKISPTNLKILRCYGAGIERVTRKDSQGGYLETRIERVRQMLASEPGAVWINQYGNPRNWESHFHGEGDEIARALDRPADMLVLGVSTSGTVLGIARRLRREWPGLRVVAVDAVGSVLFGAKPGPRELPGIGASRVPELLCRDDIDDVIHVDDYDAAMGCRRLLEREGIFAGGSSGAVVVAIDRLLARATRPLRIVTLLPDRGERYLDSVYDDEWLARIAASRAGGAVSAASPSLHVPSLEEVL</sequence>
<comment type="function">
    <text evidence="1">Catalyzes the synthesis of N-((2S)-2-amino-2-carboxyethyl)-L-glutamate (ACEGA) from O-phospho-L-serine and L-glutamate.</text>
</comment>
<comment type="catalytic activity">
    <reaction evidence="1">
        <text>O-phospho-L-serine + L-glutamate = N-[(2S)-2-amino-2-carboxyethyl]-L-glutamate + phosphate + H(+)</text>
        <dbReference type="Rhea" id="RHEA:52384"/>
        <dbReference type="ChEBI" id="CHEBI:15378"/>
        <dbReference type="ChEBI" id="CHEBI:29985"/>
        <dbReference type="ChEBI" id="CHEBI:43474"/>
        <dbReference type="ChEBI" id="CHEBI:57524"/>
        <dbReference type="ChEBI" id="CHEBI:134610"/>
        <dbReference type="EC" id="2.5.1.140"/>
    </reaction>
</comment>
<comment type="cofactor">
    <cofactor evidence="1">
        <name>pyridoxal 5'-phosphate</name>
        <dbReference type="ChEBI" id="CHEBI:597326"/>
    </cofactor>
</comment>
<comment type="pathway">
    <text evidence="1">Siderophore biosynthesis.</text>
</comment>
<comment type="subunit">
    <text evidence="1">Homodimer.</text>
</comment>
<comment type="similarity">
    <text evidence="2">Belongs to the cysteine synthase/cystathionine beta-synthase family. SbnA subfamily.</text>
</comment>
<organism>
    <name type="scientific">Ralstonia nicotianae (strain ATCC BAA-1114 / GMI1000)</name>
    <name type="common">Ralstonia solanacearum</name>
    <dbReference type="NCBI Taxonomy" id="267608"/>
    <lineage>
        <taxon>Bacteria</taxon>
        <taxon>Pseudomonadati</taxon>
        <taxon>Pseudomonadota</taxon>
        <taxon>Betaproteobacteria</taxon>
        <taxon>Burkholderiales</taxon>
        <taxon>Burkholderiaceae</taxon>
        <taxon>Ralstonia</taxon>
        <taxon>Ralstonia solanacearum species complex</taxon>
    </lineage>
</organism>
<proteinExistence type="inferred from homology"/>
<feature type="chain" id="PRO_0000395009" description="N-(2-amino-2-carboxyethyl)-L-glutamate synthase">
    <location>
        <begin position="1"/>
        <end position="338"/>
    </location>
</feature>
<feature type="binding site" evidence="1">
    <location>
        <position position="73"/>
    </location>
    <ligand>
        <name>pyridoxal 5'-phosphate</name>
        <dbReference type="ChEBI" id="CHEBI:597326"/>
    </ligand>
</feature>
<feature type="binding site" evidence="1">
    <location>
        <begin position="181"/>
        <end position="185"/>
    </location>
    <ligand>
        <name>pyridoxal 5'-phosphate</name>
        <dbReference type="ChEBI" id="CHEBI:597326"/>
    </ligand>
</feature>
<feature type="binding site" evidence="1">
    <location>
        <position position="268"/>
    </location>
    <ligand>
        <name>pyridoxal 5'-phosphate</name>
        <dbReference type="ChEBI" id="CHEBI:597326"/>
    </ligand>
</feature>
<feature type="modified residue" description="N6-(pyridoxal phosphate)lysine" evidence="1">
    <location>
        <position position="43"/>
    </location>
</feature>
<protein>
    <recommendedName>
        <fullName evidence="2">N-(2-amino-2-carboxyethyl)-L-glutamate synthase</fullName>
        <shortName evidence="2">ACEGA synthase</shortName>
        <ecNumber evidence="1">2.5.1.140</ecNumber>
    </recommendedName>
</protein>
<gene>
    <name type="primary">sbnA</name>
    <name type="ordered locus">RSp0417</name>
</gene>
<geneLocation type="plasmid">
    <name>megaplasmid Rsp</name>
</geneLocation>
<dbReference type="EC" id="2.5.1.140" evidence="1"/>
<dbReference type="EMBL" id="AL646053">
    <property type="protein sequence ID" value="CAD17568.1"/>
    <property type="molecule type" value="Genomic_DNA"/>
</dbReference>
<dbReference type="RefSeq" id="WP_011003729.1">
    <property type="nucleotide sequence ID" value="NC_003296.1"/>
</dbReference>
<dbReference type="SMR" id="Q8XSQ0"/>
<dbReference type="STRING" id="267608.RSp0417"/>
<dbReference type="EnsemblBacteria" id="CAD17568">
    <property type="protein sequence ID" value="CAD17568"/>
    <property type="gene ID" value="RSp0417"/>
</dbReference>
<dbReference type="KEGG" id="rso:RSp0417"/>
<dbReference type="eggNOG" id="COG0031">
    <property type="taxonomic scope" value="Bacteria"/>
</dbReference>
<dbReference type="HOGENOM" id="CLU_021018_1_0_4"/>
<dbReference type="Proteomes" id="UP000001436">
    <property type="component" value="Plasmid megaplasmid Rsp"/>
</dbReference>
<dbReference type="GO" id="GO:0016765">
    <property type="term" value="F:transferase activity, transferring alkyl or aryl (other than methyl) groups"/>
    <property type="evidence" value="ECO:0007669"/>
    <property type="project" value="UniProtKB-ARBA"/>
</dbReference>
<dbReference type="GO" id="GO:0006535">
    <property type="term" value="P:cysteine biosynthetic process from serine"/>
    <property type="evidence" value="ECO:0007669"/>
    <property type="project" value="InterPro"/>
</dbReference>
<dbReference type="CDD" id="cd01561">
    <property type="entry name" value="CBS_like"/>
    <property type="match status" value="1"/>
</dbReference>
<dbReference type="Gene3D" id="3.40.50.1100">
    <property type="match status" value="2"/>
</dbReference>
<dbReference type="InterPro" id="IPR050214">
    <property type="entry name" value="Cys_Synth/Cystath_Beta-Synth"/>
</dbReference>
<dbReference type="InterPro" id="IPR001216">
    <property type="entry name" value="P-phosphate_BS"/>
</dbReference>
<dbReference type="InterPro" id="IPR023927">
    <property type="entry name" value="SbnA"/>
</dbReference>
<dbReference type="InterPro" id="IPR001926">
    <property type="entry name" value="TrpB-like_PALP"/>
</dbReference>
<dbReference type="InterPro" id="IPR036052">
    <property type="entry name" value="TrpB-like_PALP_sf"/>
</dbReference>
<dbReference type="NCBIfam" id="TIGR03945">
    <property type="entry name" value="PLP_SbnA_fam"/>
    <property type="match status" value="1"/>
</dbReference>
<dbReference type="PANTHER" id="PTHR10314">
    <property type="entry name" value="CYSTATHIONINE BETA-SYNTHASE"/>
    <property type="match status" value="1"/>
</dbReference>
<dbReference type="Pfam" id="PF00291">
    <property type="entry name" value="PALP"/>
    <property type="match status" value="1"/>
</dbReference>
<dbReference type="SUPFAM" id="SSF53686">
    <property type="entry name" value="Tryptophan synthase beta subunit-like PLP-dependent enzymes"/>
    <property type="match status" value="1"/>
</dbReference>
<dbReference type="PROSITE" id="PS00901">
    <property type="entry name" value="CYS_SYNTHASE"/>
    <property type="match status" value="1"/>
</dbReference>